<comment type="function">
    <text evidence="1">ATP-dependent specificity component of the Clp protease. It directs the protease to specific substrates. Can perform chaperone functions in the absence of ClpP.</text>
</comment>
<comment type="subunit">
    <text evidence="1">Component of the ClpX-ClpP complex. Forms a hexameric ring that, in the presence of ATP, binds to fourteen ClpP subunits assembled into a disk-like structure with a central cavity, resembling the structure of eukaryotic proteasomes.</text>
</comment>
<comment type="similarity">
    <text evidence="1">Belongs to the ClpX chaperone family.</text>
</comment>
<sequence>MARIGDGGDLLKCSFCGKSQKQVKKLIAGPGVYICDECIDLCNEIIEEELSESSELKWEELPKPREIYEFLDGYVVGQEAAKKTLSVAVYNHYKRVQAGGASGGDAGKGEVELAKSNILLLGPTGCGKTLLAQTLARMLNVPFAIADATALTEAGYVGEDVENILLKLIQAADYDVKKAETGIIYIDEVDKIARKSENPSITRDVSGEGVQQALLKILEGTTASVPPQGGRKHPHQEFIQIDTTNVLFIVGGAFAGLDRIIESRIGKKSLGFRAVLHGKDDPDASNVFGDIMPEDLLKYGMIPEFIGRLPIITSVSNLDREALIRILTEPKNALVRQYKRLFELDGVDLDFTTDALEAIADQAILRGTGARGLRAIMEEVLLSVMYDIPSRKDVARAVITREVVLEHVNPTLVPRDVAASKRGPRQEKSA</sequence>
<proteinExistence type="inferred from homology"/>
<name>CLPX_PARS2</name>
<accession>A8L1X0</accession>
<evidence type="ECO:0000255" key="1">
    <source>
        <dbReference type="HAMAP-Rule" id="MF_00175"/>
    </source>
</evidence>
<evidence type="ECO:0000255" key="2">
    <source>
        <dbReference type="PROSITE-ProRule" id="PRU01250"/>
    </source>
</evidence>
<feature type="chain" id="PRO_1000097955" description="ATP-dependent Clp protease ATP-binding subunit ClpX">
    <location>
        <begin position="1"/>
        <end position="430"/>
    </location>
</feature>
<feature type="domain" description="ClpX-type ZB" evidence="2">
    <location>
        <begin position="1"/>
        <end position="54"/>
    </location>
</feature>
<feature type="binding site" evidence="2">
    <location>
        <position position="13"/>
    </location>
    <ligand>
        <name>Zn(2+)</name>
        <dbReference type="ChEBI" id="CHEBI:29105"/>
    </ligand>
</feature>
<feature type="binding site" evidence="2">
    <location>
        <position position="16"/>
    </location>
    <ligand>
        <name>Zn(2+)</name>
        <dbReference type="ChEBI" id="CHEBI:29105"/>
    </ligand>
</feature>
<feature type="binding site" evidence="2">
    <location>
        <position position="35"/>
    </location>
    <ligand>
        <name>Zn(2+)</name>
        <dbReference type="ChEBI" id="CHEBI:29105"/>
    </ligand>
</feature>
<feature type="binding site" evidence="2">
    <location>
        <position position="38"/>
    </location>
    <ligand>
        <name>Zn(2+)</name>
        <dbReference type="ChEBI" id="CHEBI:29105"/>
    </ligand>
</feature>
<feature type="binding site" evidence="1">
    <location>
        <begin position="123"/>
        <end position="130"/>
    </location>
    <ligand>
        <name>ATP</name>
        <dbReference type="ChEBI" id="CHEBI:30616"/>
    </ligand>
</feature>
<reference key="1">
    <citation type="journal article" date="2007" name="Genome Res.">
        <title>Genome characteristics of facultatively symbiotic Frankia sp. strains reflect host range and host plant biogeography.</title>
        <authorList>
            <person name="Normand P."/>
            <person name="Lapierre P."/>
            <person name="Tisa L.S."/>
            <person name="Gogarten J.P."/>
            <person name="Alloisio N."/>
            <person name="Bagnarol E."/>
            <person name="Bassi C.A."/>
            <person name="Berry A.M."/>
            <person name="Bickhart D.M."/>
            <person name="Choisne N."/>
            <person name="Couloux A."/>
            <person name="Cournoyer B."/>
            <person name="Cruveiller S."/>
            <person name="Daubin V."/>
            <person name="Demange N."/>
            <person name="Francino M.P."/>
            <person name="Goltsman E."/>
            <person name="Huang Y."/>
            <person name="Kopp O.R."/>
            <person name="Labarre L."/>
            <person name="Lapidus A."/>
            <person name="Lavire C."/>
            <person name="Marechal J."/>
            <person name="Martinez M."/>
            <person name="Mastronunzio J.E."/>
            <person name="Mullin B.C."/>
            <person name="Niemann J."/>
            <person name="Pujic P."/>
            <person name="Rawnsley T."/>
            <person name="Rouy Z."/>
            <person name="Schenowitz C."/>
            <person name="Sellstedt A."/>
            <person name="Tavares F."/>
            <person name="Tomkins J.P."/>
            <person name="Vallenet D."/>
            <person name="Valverde C."/>
            <person name="Wall L.G."/>
            <person name="Wang Y."/>
            <person name="Medigue C."/>
            <person name="Benson D.R."/>
        </authorList>
    </citation>
    <scope>NUCLEOTIDE SEQUENCE [LARGE SCALE GENOMIC DNA]</scope>
    <source>
        <strain>EAN1pec</strain>
    </source>
</reference>
<protein>
    <recommendedName>
        <fullName evidence="1">ATP-dependent Clp protease ATP-binding subunit ClpX</fullName>
    </recommendedName>
</protein>
<gene>
    <name evidence="1" type="primary">clpX</name>
    <name type="ordered locus">Franean1_5272</name>
</gene>
<organism>
    <name type="scientific">Parafrankia sp. (strain EAN1pec)</name>
    <dbReference type="NCBI Taxonomy" id="298653"/>
    <lineage>
        <taxon>Bacteria</taxon>
        <taxon>Bacillati</taxon>
        <taxon>Actinomycetota</taxon>
        <taxon>Actinomycetes</taxon>
        <taxon>Frankiales</taxon>
        <taxon>Frankiaceae</taxon>
        <taxon>Parafrankia</taxon>
    </lineage>
</organism>
<keyword id="KW-0067">ATP-binding</keyword>
<keyword id="KW-0143">Chaperone</keyword>
<keyword id="KW-0479">Metal-binding</keyword>
<keyword id="KW-0547">Nucleotide-binding</keyword>
<keyword id="KW-0862">Zinc</keyword>
<dbReference type="EMBL" id="CP000820">
    <property type="protein sequence ID" value="ABW14630.1"/>
    <property type="molecule type" value="Genomic_DNA"/>
</dbReference>
<dbReference type="RefSeq" id="WP_020462740.1">
    <property type="nucleotide sequence ID" value="NC_009921.1"/>
</dbReference>
<dbReference type="SMR" id="A8L1X0"/>
<dbReference type="STRING" id="298653.Franean1_5272"/>
<dbReference type="KEGG" id="fre:Franean1_5272"/>
<dbReference type="eggNOG" id="COG1219">
    <property type="taxonomic scope" value="Bacteria"/>
</dbReference>
<dbReference type="HOGENOM" id="CLU_014218_8_2_11"/>
<dbReference type="GO" id="GO:0009376">
    <property type="term" value="C:HslUV protease complex"/>
    <property type="evidence" value="ECO:0007669"/>
    <property type="project" value="TreeGrafter"/>
</dbReference>
<dbReference type="GO" id="GO:0005524">
    <property type="term" value="F:ATP binding"/>
    <property type="evidence" value="ECO:0007669"/>
    <property type="project" value="UniProtKB-UniRule"/>
</dbReference>
<dbReference type="GO" id="GO:0016887">
    <property type="term" value="F:ATP hydrolysis activity"/>
    <property type="evidence" value="ECO:0007669"/>
    <property type="project" value="InterPro"/>
</dbReference>
<dbReference type="GO" id="GO:0140662">
    <property type="term" value="F:ATP-dependent protein folding chaperone"/>
    <property type="evidence" value="ECO:0007669"/>
    <property type="project" value="InterPro"/>
</dbReference>
<dbReference type="GO" id="GO:0046983">
    <property type="term" value="F:protein dimerization activity"/>
    <property type="evidence" value="ECO:0007669"/>
    <property type="project" value="InterPro"/>
</dbReference>
<dbReference type="GO" id="GO:0051082">
    <property type="term" value="F:unfolded protein binding"/>
    <property type="evidence" value="ECO:0007669"/>
    <property type="project" value="UniProtKB-UniRule"/>
</dbReference>
<dbReference type="GO" id="GO:0008270">
    <property type="term" value="F:zinc ion binding"/>
    <property type="evidence" value="ECO:0007669"/>
    <property type="project" value="InterPro"/>
</dbReference>
<dbReference type="GO" id="GO:0051301">
    <property type="term" value="P:cell division"/>
    <property type="evidence" value="ECO:0007669"/>
    <property type="project" value="TreeGrafter"/>
</dbReference>
<dbReference type="GO" id="GO:0051603">
    <property type="term" value="P:proteolysis involved in protein catabolic process"/>
    <property type="evidence" value="ECO:0007669"/>
    <property type="project" value="TreeGrafter"/>
</dbReference>
<dbReference type="CDD" id="cd19497">
    <property type="entry name" value="RecA-like_ClpX"/>
    <property type="match status" value="1"/>
</dbReference>
<dbReference type="FunFam" id="1.10.8.60:FF:000002">
    <property type="entry name" value="ATP-dependent Clp protease ATP-binding subunit ClpX"/>
    <property type="match status" value="1"/>
</dbReference>
<dbReference type="FunFam" id="3.40.50.300:FF:000005">
    <property type="entry name" value="ATP-dependent Clp protease ATP-binding subunit ClpX"/>
    <property type="match status" value="1"/>
</dbReference>
<dbReference type="Gene3D" id="1.10.8.60">
    <property type="match status" value="1"/>
</dbReference>
<dbReference type="Gene3D" id="6.20.220.10">
    <property type="entry name" value="ClpX chaperone, C4-type zinc finger domain"/>
    <property type="match status" value="1"/>
</dbReference>
<dbReference type="Gene3D" id="3.40.50.300">
    <property type="entry name" value="P-loop containing nucleotide triphosphate hydrolases"/>
    <property type="match status" value="1"/>
</dbReference>
<dbReference type="HAMAP" id="MF_00175">
    <property type="entry name" value="ClpX"/>
    <property type="match status" value="1"/>
</dbReference>
<dbReference type="InterPro" id="IPR003593">
    <property type="entry name" value="AAA+_ATPase"/>
</dbReference>
<dbReference type="InterPro" id="IPR050052">
    <property type="entry name" value="ATP-dep_Clp_protease_ClpX"/>
</dbReference>
<dbReference type="InterPro" id="IPR003959">
    <property type="entry name" value="ATPase_AAA_core"/>
</dbReference>
<dbReference type="InterPro" id="IPR019489">
    <property type="entry name" value="Clp_ATPase_C"/>
</dbReference>
<dbReference type="InterPro" id="IPR004487">
    <property type="entry name" value="Clp_protease_ATP-bd_su_ClpX"/>
</dbReference>
<dbReference type="InterPro" id="IPR046425">
    <property type="entry name" value="ClpX_bact"/>
</dbReference>
<dbReference type="InterPro" id="IPR027417">
    <property type="entry name" value="P-loop_NTPase"/>
</dbReference>
<dbReference type="InterPro" id="IPR010603">
    <property type="entry name" value="Znf_CppX_C4"/>
</dbReference>
<dbReference type="InterPro" id="IPR038366">
    <property type="entry name" value="Znf_CppX_C4_sf"/>
</dbReference>
<dbReference type="NCBIfam" id="TIGR00382">
    <property type="entry name" value="clpX"/>
    <property type="match status" value="1"/>
</dbReference>
<dbReference type="NCBIfam" id="NF003745">
    <property type="entry name" value="PRK05342.1"/>
    <property type="match status" value="1"/>
</dbReference>
<dbReference type="PANTHER" id="PTHR48102:SF7">
    <property type="entry name" value="ATP-DEPENDENT CLP PROTEASE ATP-BINDING SUBUNIT CLPX-LIKE, MITOCHONDRIAL"/>
    <property type="match status" value="1"/>
</dbReference>
<dbReference type="PANTHER" id="PTHR48102">
    <property type="entry name" value="ATP-DEPENDENT CLP PROTEASE ATP-BINDING SUBUNIT CLPX-LIKE, MITOCHONDRIAL-RELATED"/>
    <property type="match status" value="1"/>
</dbReference>
<dbReference type="Pfam" id="PF07724">
    <property type="entry name" value="AAA_2"/>
    <property type="match status" value="1"/>
</dbReference>
<dbReference type="Pfam" id="PF10431">
    <property type="entry name" value="ClpB_D2-small"/>
    <property type="match status" value="1"/>
</dbReference>
<dbReference type="Pfam" id="PF06689">
    <property type="entry name" value="zf-C4_ClpX"/>
    <property type="match status" value="1"/>
</dbReference>
<dbReference type="SMART" id="SM00382">
    <property type="entry name" value="AAA"/>
    <property type="match status" value="1"/>
</dbReference>
<dbReference type="SMART" id="SM01086">
    <property type="entry name" value="ClpB_D2-small"/>
    <property type="match status" value="1"/>
</dbReference>
<dbReference type="SMART" id="SM00994">
    <property type="entry name" value="zf-C4_ClpX"/>
    <property type="match status" value="1"/>
</dbReference>
<dbReference type="SUPFAM" id="SSF57716">
    <property type="entry name" value="Glucocorticoid receptor-like (DNA-binding domain)"/>
    <property type="match status" value="1"/>
</dbReference>
<dbReference type="SUPFAM" id="SSF52540">
    <property type="entry name" value="P-loop containing nucleoside triphosphate hydrolases"/>
    <property type="match status" value="1"/>
</dbReference>
<dbReference type="PROSITE" id="PS51902">
    <property type="entry name" value="CLPX_ZB"/>
    <property type="match status" value="1"/>
</dbReference>